<organism>
    <name type="scientific">Citrifermentans bemidjiense (strain ATCC BAA-1014 / DSM 16622 / JCM 12645 / Bem)</name>
    <name type="common">Geobacter bemidjiensis</name>
    <dbReference type="NCBI Taxonomy" id="404380"/>
    <lineage>
        <taxon>Bacteria</taxon>
        <taxon>Pseudomonadati</taxon>
        <taxon>Thermodesulfobacteriota</taxon>
        <taxon>Desulfuromonadia</taxon>
        <taxon>Geobacterales</taxon>
        <taxon>Geobacteraceae</taxon>
        <taxon>Citrifermentans</taxon>
    </lineage>
</organism>
<protein>
    <recommendedName>
        <fullName evidence="1">Triosephosphate isomerase</fullName>
        <shortName evidence="1">TIM</shortName>
        <shortName evidence="1">TPI</shortName>
        <ecNumber evidence="1">5.3.1.1</ecNumber>
    </recommendedName>
    <alternativeName>
        <fullName evidence="1">Triose-phosphate isomerase</fullName>
    </alternativeName>
</protein>
<proteinExistence type="inferred from homology"/>
<keyword id="KW-0963">Cytoplasm</keyword>
<keyword id="KW-0312">Gluconeogenesis</keyword>
<keyword id="KW-0324">Glycolysis</keyword>
<keyword id="KW-0413">Isomerase</keyword>
<keyword id="KW-1185">Reference proteome</keyword>
<evidence type="ECO:0000255" key="1">
    <source>
        <dbReference type="HAMAP-Rule" id="MF_00147"/>
    </source>
</evidence>
<feature type="chain" id="PRO_1000096501" description="Triosephosphate isomerase">
    <location>
        <begin position="1"/>
        <end position="251"/>
    </location>
</feature>
<feature type="active site" description="Electrophile" evidence="1">
    <location>
        <position position="95"/>
    </location>
</feature>
<feature type="active site" description="Proton acceptor" evidence="1">
    <location>
        <position position="167"/>
    </location>
</feature>
<feature type="binding site" evidence="1">
    <location>
        <begin position="9"/>
        <end position="11"/>
    </location>
    <ligand>
        <name>substrate</name>
    </ligand>
</feature>
<feature type="binding site" evidence="1">
    <location>
        <position position="173"/>
    </location>
    <ligand>
        <name>substrate</name>
    </ligand>
</feature>
<feature type="binding site" evidence="1">
    <location>
        <position position="213"/>
    </location>
    <ligand>
        <name>substrate</name>
    </ligand>
</feature>
<feature type="binding site" evidence="1">
    <location>
        <begin position="234"/>
        <end position="235"/>
    </location>
    <ligand>
        <name>substrate</name>
    </ligand>
</feature>
<gene>
    <name evidence="1" type="primary">tpiA</name>
    <name type="ordered locus">Gbem_2338</name>
</gene>
<comment type="function">
    <text evidence="1">Involved in the gluconeogenesis. Catalyzes stereospecifically the conversion of dihydroxyacetone phosphate (DHAP) to D-glyceraldehyde-3-phosphate (G3P).</text>
</comment>
<comment type="catalytic activity">
    <reaction evidence="1">
        <text>D-glyceraldehyde 3-phosphate = dihydroxyacetone phosphate</text>
        <dbReference type="Rhea" id="RHEA:18585"/>
        <dbReference type="ChEBI" id="CHEBI:57642"/>
        <dbReference type="ChEBI" id="CHEBI:59776"/>
        <dbReference type="EC" id="5.3.1.1"/>
    </reaction>
</comment>
<comment type="pathway">
    <text evidence="1">Carbohydrate biosynthesis; gluconeogenesis.</text>
</comment>
<comment type="pathway">
    <text evidence="1">Carbohydrate degradation; glycolysis; D-glyceraldehyde 3-phosphate from glycerone phosphate: step 1/1.</text>
</comment>
<comment type="subunit">
    <text evidence="1">Homodimer.</text>
</comment>
<comment type="subcellular location">
    <subcellularLocation>
        <location evidence="1">Cytoplasm</location>
    </subcellularLocation>
</comment>
<comment type="similarity">
    <text evidence="1">Belongs to the triosephosphate isomerase family.</text>
</comment>
<reference key="1">
    <citation type="submission" date="2008-07" db="EMBL/GenBank/DDBJ databases">
        <title>Complete sequence of Geobacter bemidjiensis BEM.</title>
        <authorList>
            <consortium name="US DOE Joint Genome Institute"/>
            <person name="Lucas S."/>
            <person name="Copeland A."/>
            <person name="Lapidus A."/>
            <person name="Glavina del Rio T."/>
            <person name="Dalin E."/>
            <person name="Tice H."/>
            <person name="Bruce D."/>
            <person name="Goodwin L."/>
            <person name="Pitluck S."/>
            <person name="Kiss H."/>
            <person name="Brettin T."/>
            <person name="Detter J.C."/>
            <person name="Han C."/>
            <person name="Kuske C.R."/>
            <person name="Schmutz J."/>
            <person name="Larimer F."/>
            <person name="Land M."/>
            <person name="Hauser L."/>
            <person name="Kyrpides N."/>
            <person name="Lykidis A."/>
            <person name="Lovley D."/>
            <person name="Richardson P."/>
        </authorList>
    </citation>
    <scope>NUCLEOTIDE SEQUENCE [LARGE SCALE GENOMIC DNA]</scope>
    <source>
        <strain>ATCC BAA-1014 / DSM 16622 / JCM 12645 / Bem</strain>
    </source>
</reference>
<dbReference type="EC" id="5.3.1.1" evidence="1"/>
<dbReference type="EMBL" id="CP001124">
    <property type="protein sequence ID" value="ACH39350.1"/>
    <property type="molecule type" value="Genomic_DNA"/>
</dbReference>
<dbReference type="RefSeq" id="WP_012530772.1">
    <property type="nucleotide sequence ID" value="NC_011146.1"/>
</dbReference>
<dbReference type="SMR" id="B5EF41"/>
<dbReference type="STRING" id="404380.Gbem_2338"/>
<dbReference type="KEGG" id="gbm:Gbem_2338"/>
<dbReference type="eggNOG" id="COG0149">
    <property type="taxonomic scope" value="Bacteria"/>
</dbReference>
<dbReference type="HOGENOM" id="CLU_024251_2_3_7"/>
<dbReference type="OrthoDB" id="9809429at2"/>
<dbReference type="UniPathway" id="UPA00109">
    <property type="reaction ID" value="UER00189"/>
</dbReference>
<dbReference type="UniPathway" id="UPA00138"/>
<dbReference type="Proteomes" id="UP000008825">
    <property type="component" value="Chromosome"/>
</dbReference>
<dbReference type="GO" id="GO:0005829">
    <property type="term" value="C:cytosol"/>
    <property type="evidence" value="ECO:0007669"/>
    <property type="project" value="TreeGrafter"/>
</dbReference>
<dbReference type="GO" id="GO:0004807">
    <property type="term" value="F:triose-phosphate isomerase activity"/>
    <property type="evidence" value="ECO:0007669"/>
    <property type="project" value="UniProtKB-UniRule"/>
</dbReference>
<dbReference type="GO" id="GO:0006094">
    <property type="term" value="P:gluconeogenesis"/>
    <property type="evidence" value="ECO:0007669"/>
    <property type="project" value="UniProtKB-UniRule"/>
</dbReference>
<dbReference type="GO" id="GO:0046166">
    <property type="term" value="P:glyceraldehyde-3-phosphate biosynthetic process"/>
    <property type="evidence" value="ECO:0007669"/>
    <property type="project" value="TreeGrafter"/>
</dbReference>
<dbReference type="GO" id="GO:0019563">
    <property type="term" value="P:glycerol catabolic process"/>
    <property type="evidence" value="ECO:0007669"/>
    <property type="project" value="TreeGrafter"/>
</dbReference>
<dbReference type="GO" id="GO:0006096">
    <property type="term" value="P:glycolytic process"/>
    <property type="evidence" value="ECO:0007669"/>
    <property type="project" value="UniProtKB-UniRule"/>
</dbReference>
<dbReference type="CDD" id="cd00311">
    <property type="entry name" value="TIM"/>
    <property type="match status" value="1"/>
</dbReference>
<dbReference type="FunFam" id="3.20.20.70:FF:000016">
    <property type="entry name" value="Triosephosphate isomerase"/>
    <property type="match status" value="1"/>
</dbReference>
<dbReference type="Gene3D" id="3.20.20.70">
    <property type="entry name" value="Aldolase class I"/>
    <property type="match status" value="1"/>
</dbReference>
<dbReference type="HAMAP" id="MF_00147_B">
    <property type="entry name" value="TIM_B"/>
    <property type="match status" value="1"/>
</dbReference>
<dbReference type="InterPro" id="IPR013785">
    <property type="entry name" value="Aldolase_TIM"/>
</dbReference>
<dbReference type="InterPro" id="IPR035990">
    <property type="entry name" value="TIM_sf"/>
</dbReference>
<dbReference type="InterPro" id="IPR022896">
    <property type="entry name" value="TrioseP_Isoase_bac/euk"/>
</dbReference>
<dbReference type="InterPro" id="IPR000652">
    <property type="entry name" value="Triosephosphate_isomerase"/>
</dbReference>
<dbReference type="InterPro" id="IPR020861">
    <property type="entry name" value="Triosephosphate_isomerase_AS"/>
</dbReference>
<dbReference type="NCBIfam" id="TIGR00419">
    <property type="entry name" value="tim"/>
    <property type="match status" value="1"/>
</dbReference>
<dbReference type="PANTHER" id="PTHR21139">
    <property type="entry name" value="TRIOSEPHOSPHATE ISOMERASE"/>
    <property type="match status" value="1"/>
</dbReference>
<dbReference type="PANTHER" id="PTHR21139:SF42">
    <property type="entry name" value="TRIOSEPHOSPHATE ISOMERASE"/>
    <property type="match status" value="1"/>
</dbReference>
<dbReference type="Pfam" id="PF00121">
    <property type="entry name" value="TIM"/>
    <property type="match status" value="1"/>
</dbReference>
<dbReference type="SUPFAM" id="SSF51351">
    <property type="entry name" value="Triosephosphate isomerase (TIM)"/>
    <property type="match status" value="1"/>
</dbReference>
<dbReference type="PROSITE" id="PS00171">
    <property type="entry name" value="TIM_1"/>
    <property type="match status" value="1"/>
</dbReference>
<dbReference type="PROSITE" id="PS51440">
    <property type="entry name" value="TIM_2"/>
    <property type="match status" value="1"/>
</dbReference>
<accession>B5EF41</accession>
<sequence>MRKPVIAGNWKLFKTKNEALALIEELAPLVSGVDSVEIVVAPVFTVLPTLPAALAGTGISLAAQDVFWEEEGAFTGEVSPRMLLDAGASHVIIGHSERRQYFGETEETVNKKVKAALKGALVPIVCIGETLEAREAGDTFKVLERQLKGGLEGLTGTQFAPVIVAYEPVWAIGTGKVASDDQAQEAHAFIRGVIAGLFGKSAADKVRILYGGSVKPDNVKGLMSRPDIDGALVGGASLKGASFASIVRYSE</sequence>
<name>TPIS_CITBB</name>